<organism>
    <name type="scientific">Streptococcus pyogenes serotype M1</name>
    <dbReference type="NCBI Taxonomy" id="301447"/>
    <lineage>
        <taxon>Bacteria</taxon>
        <taxon>Bacillati</taxon>
        <taxon>Bacillota</taxon>
        <taxon>Bacilli</taxon>
        <taxon>Lactobacillales</taxon>
        <taxon>Streptococcaceae</taxon>
        <taxon>Streptococcus</taxon>
    </lineage>
</organism>
<reference key="1">
    <citation type="journal article" date="2001" name="Proc. Natl. Acad. Sci. U.S.A.">
        <title>Complete genome sequence of an M1 strain of Streptococcus pyogenes.</title>
        <authorList>
            <person name="Ferretti J.J."/>
            <person name="McShan W.M."/>
            <person name="Ajdic D.J."/>
            <person name="Savic D.J."/>
            <person name="Savic G."/>
            <person name="Lyon K."/>
            <person name="Primeaux C."/>
            <person name="Sezate S."/>
            <person name="Suvorov A.N."/>
            <person name="Kenton S."/>
            <person name="Lai H.S."/>
            <person name="Lin S.P."/>
            <person name="Qian Y."/>
            <person name="Jia H.G."/>
            <person name="Najar F.Z."/>
            <person name="Ren Q."/>
            <person name="Zhu H."/>
            <person name="Song L."/>
            <person name="White J."/>
            <person name="Yuan X."/>
            <person name="Clifton S.W."/>
            <person name="Roe B.A."/>
            <person name="McLaughlin R.E."/>
        </authorList>
    </citation>
    <scope>NUCLEOTIDE SEQUENCE [LARGE SCALE GENOMIC DNA]</scope>
    <source>
        <strain>ATCC 700294 / SF370 / Serotype M1</strain>
    </source>
</reference>
<reference key="2">
    <citation type="journal article" date="2005" name="J. Infect. Dis.">
        <title>Evolutionary origin and emergence of a highly successful clone of serotype M1 group A Streptococcus involved multiple horizontal gene transfer events.</title>
        <authorList>
            <person name="Sumby P."/>
            <person name="Porcella S.F."/>
            <person name="Madrigal A.G."/>
            <person name="Barbian K.D."/>
            <person name="Virtaneva K."/>
            <person name="Ricklefs S.M."/>
            <person name="Sturdevant D.E."/>
            <person name="Graham M.R."/>
            <person name="Vuopio-Varkila J."/>
            <person name="Hoe N.P."/>
            <person name="Musser J.M."/>
        </authorList>
    </citation>
    <scope>NUCLEOTIDE SEQUENCE [LARGE SCALE GENOMIC DNA]</scope>
    <source>
        <strain>ATCC BAA-947 / MGAS5005 / Serotype M1</strain>
    </source>
</reference>
<protein>
    <recommendedName>
        <fullName evidence="1">ATP-dependent 6-phosphofructokinase</fullName>
        <shortName evidence="1">ATP-PFK</shortName>
        <shortName evidence="1">Phosphofructokinase</shortName>
        <ecNumber evidence="1">2.7.1.11</ecNumber>
    </recommendedName>
    <alternativeName>
        <fullName evidence="1">Phosphohexokinase</fullName>
    </alternativeName>
</protein>
<gene>
    <name evidence="1" type="primary">pfkA</name>
    <name type="synonym">pfk</name>
    <name type="ordered locus">SPy_1283</name>
    <name type="ordered locus">M5005_Spy0989</name>
</gene>
<sequence length="337" mass="35748">MKRIAVLTSGGDAPGMNAAIRAVVRKAISEGMEVYGINRGYAGMVDGDIFPLGSKEVGDKISRGGTFLYSARYPEFAQLEGQLAGIEQLKKHGIEGVVVIGGDGSYHGAMRLTEHGFPAVGIPGTIDNDIAGTDYTIGFDTAVNTAVEAIDKLRDTSSSHGRTFVVEVMGRNAGDIALWAGIASGADQIIVPEEEFDIEKVASTIQYDFEHKGKNHHIIVLAEGVMSGEAFAQKLKEAGDKSDLRVTNLGHILRGGSPTARDRVIASWMGSHAVELLKDGKGGLAVGIHNEELVESPILGTAEEGALFSLTEEGKIIVNNPHKARLDFAALNRSLSQ</sequence>
<name>PFKA_STRP1</name>
<keyword id="KW-0021">Allosteric enzyme</keyword>
<keyword id="KW-0067">ATP-binding</keyword>
<keyword id="KW-0963">Cytoplasm</keyword>
<keyword id="KW-0324">Glycolysis</keyword>
<keyword id="KW-0418">Kinase</keyword>
<keyword id="KW-0460">Magnesium</keyword>
<keyword id="KW-0479">Metal-binding</keyword>
<keyword id="KW-0547">Nucleotide-binding</keyword>
<keyword id="KW-1185">Reference proteome</keyword>
<keyword id="KW-0808">Transferase</keyword>
<dbReference type="EC" id="2.7.1.11" evidence="1"/>
<dbReference type="EMBL" id="AE004092">
    <property type="protein sequence ID" value="AAK34131.1"/>
    <property type="molecule type" value="Genomic_DNA"/>
</dbReference>
<dbReference type="EMBL" id="CP000017">
    <property type="protein sequence ID" value="AAZ51607.1"/>
    <property type="molecule type" value="Genomic_DNA"/>
</dbReference>
<dbReference type="RefSeq" id="NP_269410.1">
    <property type="nucleotide sequence ID" value="NC_002737.2"/>
</dbReference>
<dbReference type="SMR" id="Q99ZD0"/>
<dbReference type="PaxDb" id="1314-HKU360_01032"/>
<dbReference type="KEGG" id="spy:SPy_1283"/>
<dbReference type="KEGG" id="spz:M5005_Spy0989"/>
<dbReference type="PATRIC" id="fig|160490.10.peg.1121"/>
<dbReference type="HOGENOM" id="CLU_020655_0_1_9"/>
<dbReference type="OMA" id="GYQGMIE"/>
<dbReference type="UniPathway" id="UPA00109">
    <property type="reaction ID" value="UER00182"/>
</dbReference>
<dbReference type="Proteomes" id="UP000000750">
    <property type="component" value="Chromosome"/>
</dbReference>
<dbReference type="GO" id="GO:0005945">
    <property type="term" value="C:6-phosphofructokinase complex"/>
    <property type="evidence" value="ECO:0007669"/>
    <property type="project" value="TreeGrafter"/>
</dbReference>
<dbReference type="GO" id="GO:0003872">
    <property type="term" value="F:6-phosphofructokinase activity"/>
    <property type="evidence" value="ECO:0007669"/>
    <property type="project" value="UniProtKB-UniRule"/>
</dbReference>
<dbReference type="GO" id="GO:0016208">
    <property type="term" value="F:AMP binding"/>
    <property type="evidence" value="ECO:0007669"/>
    <property type="project" value="TreeGrafter"/>
</dbReference>
<dbReference type="GO" id="GO:0005524">
    <property type="term" value="F:ATP binding"/>
    <property type="evidence" value="ECO:0007669"/>
    <property type="project" value="UniProtKB-KW"/>
</dbReference>
<dbReference type="GO" id="GO:0070095">
    <property type="term" value="F:fructose-6-phosphate binding"/>
    <property type="evidence" value="ECO:0007669"/>
    <property type="project" value="TreeGrafter"/>
</dbReference>
<dbReference type="GO" id="GO:0042802">
    <property type="term" value="F:identical protein binding"/>
    <property type="evidence" value="ECO:0007669"/>
    <property type="project" value="TreeGrafter"/>
</dbReference>
<dbReference type="GO" id="GO:0046872">
    <property type="term" value="F:metal ion binding"/>
    <property type="evidence" value="ECO:0007669"/>
    <property type="project" value="UniProtKB-KW"/>
</dbReference>
<dbReference type="GO" id="GO:0048029">
    <property type="term" value="F:monosaccharide binding"/>
    <property type="evidence" value="ECO:0007669"/>
    <property type="project" value="TreeGrafter"/>
</dbReference>
<dbReference type="GO" id="GO:0061621">
    <property type="term" value="P:canonical glycolysis"/>
    <property type="evidence" value="ECO:0007669"/>
    <property type="project" value="TreeGrafter"/>
</dbReference>
<dbReference type="GO" id="GO:0030388">
    <property type="term" value="P:fructose 1,6-bisphosphate metabolic process"/>
    <property type="evidence" value="ECO:0007669"/>
    <property type="project" value="TreeGrafter"/>
</dbReference>
<dbReference type="GO" id="GO:0006002">
    <property type="term" value="P:fructose 6-phosphate metabolic process"/>
    <property type="evidence" value="ECO:0007669"/>
    <property type="project" value="InterPro"/>
</dbReference>
<dbReference type="FunFam" id="3.40.50.450:FF:000001">
    <property type="entry name" value="ATP-dependent 6-phosphofructokinase"/>
    <property type="match status" value="1"/>
</dbReference>
<dbReference type="FunFam" id="3.40.50.460:FF:000002">
    <property type="entry name" value="ATP-dependent 6-phosphofructokinase"/>
    <property type="match status" value="1"/>
</dbReference>
<dbReference type="Gene3D" id="3.40.50.450">
    <property type="match status" value="1"/>
</dbReference>
<dbReference type="Gene3D" id="3.40.50.460">
    <property type="entry name" value="Phosphofructokinase domain"/>
    <property type="match status" value="1"/>
</dbReference>
<dbReference type="HAMAP" id="MF_00339">
    <property type="entry name" value="Phosphofructokinase_I_B1"/>
    <property type="match status" value="1"/>
</dbReference>
<dbReference type="InterPro" id="IPR022953">
    <property type="entry name" value="ATP_PFK"/>
</dbReference>
<dbReference type="InterPro" id="IPR012003">
    <property type="entry name" value="ATP_PFK_prok-type"/>
</dbReference>
<dbReference type="InterPro" id="IPR012828">
    <property type="entry name" value="PFKA_ATP_prok"/>
</dbReference>
<dbReference type="InterPro" id="IPR015912">
    <property type="entry name" value="Phosphofructokinase_CS"/>
</dbReference>
<dbReference type="InterPro" id="IPR000023">
    <property type="entry name" value="Phosphofructokinase_dom"/>
</dbReference>
<dbReference type="InterPro" id="IPR035966">
    <property type="entry name" value="PKF_sf"/>
</dbReference>
<dbReference type="NCBIfam" id="TIGR02482">
    <property type="entry name" value="PFKA_ATP"/>
    <property type="match status" value="1"/>
</dbReference>
<dbReference type="NCBIfam" id="NF002872">
    <property type="entry name" value="PRK03202.1"/>
    <property type="match status" value="1"/>
</dbReference>
<dbReference type="PANTHER" id="PTHR13697:SF4">
    <property type="entry name" value="ATP-DEPENDENT 6-PHOSPHOFRUCTOKINASE"/>
    <property type="match status" value="1"/>
</dbReference>
<dbReference type="PANTHER" id="PTHR13697">
    <property type="entry name" value="PHOSPHOFRUCTOKINASE"/>
    <property type="match status" value="1"/>
</dbReference>
<dbReference type="Pfam" id="PF00365">
    <property type="entry name" value="PFK"/>
    <property type="match status" value="1"/>
</dbReference>
<dbReference type="PIRSF" id="PIRSF000532">
    <property type="entry name" value="ATP_PFK_prok"/>
    <property type="match status" value="1"/>
</dbReference>
<dbReference type="PRINTS" id="PR00476">
    <property type="entry name" value="PHFRCTKINASE"/>
</dbReference>
<dbReference type="SUPFAM" id="SSF53784">
    <property type="entry name" value="Phosphofructokinase"/>
    <property type="match status" value="1"/>
</dbReference>
<dbReference type="PROSITE" id="PS00433">
    <property type="entry name" value="PHOSPHOFRUCTOKINASE"/>
    <property type="match status" value="1"/>
</dbReference>
<comment type="function">
    <text evidence="1">Catalyzes the phosphorylation of D-fructose 6-phosphate to fructose 1,6-bisphosphate by ATP, the first committing step of glycolysis.</text>
</comment>
<comment type="catalytic activity">
    <reaction evidence="1">
        <text>beta-D-fructose 6-phosphate + ATP = beta-D-fructose 1,6-bisphosphate + ADP + H(+)</text>
        <dbReference type="Rhea" id="RHEA:16109"/>
        <dbReference type="ChEBI" id="CHEBI:15378"/>
        <dbReference type="ChEBI" id="CHEBI:30616"/>
        <dbReference type="ChEBI" id="CHEBI:32966"/>
        <dbReference type="ChEBI" id="CHEBI:57634"/>
        <dbReference type="ChEBI" id="CHEBI:456216"/>
        <dbReference type="EC" id="2.7.1.11"/>
    </reaction>
</comment>
<comment type="cofactor">
    <cofactor evidence="1">
        <name>Mg(2+)</name>
        <dbReference type="ChEBI" id="CHEBI:18420"/>
    </cofactor>
</comment>
<comment type="activity regulation">
    <text evidence="1">Allosterically activated by ADP and other diphosphonucleosides, and allosterically inhibited by phosphoenolpyruvate.</text>
</comment>
<comment type="pathway">
    <text evidence="1">Carbohydrate degradation; glycolysis; D-glyceraldehyde 3-phosphate and glycerone phosphate from D-glucose: step 3/4.</text>
</comment>
<comment type="subunit">
    <text evidence="1">Homotetramer.</text>
</comment>
<comment type="subcellular location">
    <subcellularLocation>
        <location evidence="1">Cytoplasm</location>
    </subcellularLocation>
</comment>
<comment type="similarity">
    <text evidence="1">Belongs to the phosphofructokinase type A (PFKA) family. ATP-dependent PFK group I subfamily. Prokaryotic clade 'B1' sub-subfamily.</text>
</comment>
<accession>Q99ZD0</accession>
<accession>Q48YG5</accession>
<proteinExistence type="inferred from homology"/>
<feature type="chain" id="PRO_0000111992" description="ATP-dependent 6-phosphofructokinase">
    <location>
        <begin position="1"/>
        <end position="337"/>
    </location>
</feature>
<feature type="active site" description="Proton acceptor" evidence="1">
    <location>
        <position position="127"/>
    </location>
</feature>
<feature type="binding site" evidence="1">
    <location>
        <position position="11"/>
    </location>
    <ligand>
        <name>ATP</name>
        <dbReference type="ChEBI" id="CHEBI:30616"/>
    </ligand>
</feature>
<feature type="binding site" evidence="1">
    <location>
        <begin position="21"/>
        <end position="25"/>
    </location>
    <ligand>
        <name>ADP</name>
        <dbReference type="ChEBI" id="CHEBI:456216"/>
        <note>allosteric activator; ligand shared between dimeric partners</note>
    </ligand>
</feature>
<feature type="binding site" evidence="1">
    <location>
        <begin position="72"/>
        <end position="73"/>
    </location>
    <ligand>
        <name>ATP</name>
        <dbReference type="ChEBI" id="CHEBI:30616"/>
    </ligand>
</feature>
<feature type="binding site" evidence="1">
    <location>
        <begin position="102"/>
        <end position="105"/>
    </location>
    <ligand>
        <name>ATP</name>
        <dbReference type="ChEBI" id="CHEBI:30616"/>
    </ligand>
</feature>
<feature type="binding site" evidence="1">
    <location>
        <position position="103"/>
    </location>
    <ligand>
        <name>Mg(2+)</name>
        <dbReference type="ChEBI" id="CHEBI:18420"/>
        <note>catalytic</note>
    </ligand>
</feature>
<feature type="binding site" description="in other chain" evidence="1">
    <location>
        <begin position="125"/>
        <end position="127"/>
    </location>
    <ligand>
        <name>substrate</name>
        <note>ligand shared between dimeric partners</note>
    </ligand>
</feature>
<feature type="binding site" description="in other chain" evidence="1">
    <location>
        <position position="154"/>
    </location>
    <ligand>
        <name>ADP</name>
        <dbReference type="ChEBI" id="CHEBI:456216"/>
        <note>allosteric activator; ligand shared between dimeric partners</note>
    </ligand>
</feature>
<feature type="binding site" evidence="1">
    <location>
        <position position="162"/>
    </location>
    <ligand>
        <name>substrate</name>
        <note>ligand shared between dimeric partners</note>
    </ligand>
</feature>
<feature type="binding site" description="in other chain" evidence="1">
    <location>
        <begin position="169"/>
        <end position="171"/>
    </location>
    <ligand>
        <name>substrate</name>
        <note>ligand shared between dimeric partners</note>
    </ligand>
</feature>
<feature type="binding site" description="in other chain" evidence="1">
    <location>
        <begin position="185"/>
        <end position="187"/>
    </location>
    <ligand>
        <name>ADP</name>
        <dbReference type="ChEBI" id="CHEBI:456216"/>
        <note>allosteric activator; ligand shared between dimeric partners</note>
    </ligand>
</feature>
<feature type="binding site" description="in other chain" evidence="1">
    <location>
        <position position="212"/>
    </location>
    <ligand>
        <name>ADP</name>
        <dbReference type="ChEBI" id="CHEBI:456216"/>
        <note>allosteric activator; ligand shared between dimeric partners</note>
    </ligand>
</feature>
<feature type="binding site" description="in other chain" evidence="1">
    <location>
        <begin position="214"/>
        <end position="216"/>
    </location>
    <ligand>
        <name>ADP</name>
        <dbReference type="ChEBI" id="CHEBI:456216"/>
        <note>allosteric activator; ligand shared between dimeric partners</note>
    </ligand>
</feature>
<feature type="binding site" description="in other chain" evidence="1">
    <location>
        <position position="223"/>
    </location>
    <ligand>
        <name>substrate</name>
        <note>ligand shared between dimeric partners</note>
    </ligand>
</feature>
<feature type="binding site" evidence="1">
    <location>
        <position position="245"/>
    </location>
    <ligand>
        <name>substrate</name>
        <note>ligand shared between dimeric partners</note>
    </ligand>
</feature>
<feature type="binding site" description="in other chain" evidence="1">
    <location>
        <begin position="251"/>
        <end position="254"/>
    </location>
    <ligand>
        <name>substrate</name>
        <note>ligand shared between dimeric partners</note>
    </ligand>
</feature>
<evidence type="ECO:0000255" key="1">
    <source>
        <dbReference type="HAMAP-Rule" id="MF_00339"/>
    </source>
</evidence>